<reference key="1">
    <citation type="journal article" date="2007" name="Science">
        <title>Legumes symbioses: absence of nod genes in photosynthetic bradyrhizobia.</title>
        <authorList>
            <person name="Giraud E."/>
            <person name="Moulin L."/>
            <person name="Vallenet D."/>
            <person name="Barbe V."/>
            <person name="Cytryn E."/>
            <person name="Avarre J.-C."/>
            <person name="Jaubert M."/>
            <person name="Simon D."/>
            <person name="Cartieaux F."/>
            <person name="Prin Y."/>
            <person name="Bena G."/>
            <person name="Hannibal L."/>
            <person name="Fardoux J."/>
            <person name="Kojadinovic M."/>
            <person name="Vuillet L."/>
            <person name="Lajus A."/>
            <person name="Cruveiller S."/>
            <person name="Rouy Z."/>
            <person name="Mangenot S."/>
            <person name="Segurens B."/>
            <person name="Dossat C."/>
            <person name="Franck W.L."/>
            <person name="Chang W.-S."/>
            <person name="Saunders E."/>
            <person name="Bruce D."/>
            <person name="Richardson P."/>
            <person name="Normand P."/>
            <person name="Dreyfus B."/>
            <person name="Pignol D."/>
            <person name="Stacey G."/>
            <person name="Emerich D."/>
            <person name="Vermeglio A."/>
            <person name="Medigue C."/>
            <person name="Sadowsky M."/>
        </authorList>
    </citation>
    <scope>NUCLEOTIDE SEQUENCE [LARGE SCALE GENOMIC DNA]</scope>
    <source>
        <strain>ORS 278</strain>
    </source>
</reference>
<protein>
    <recommendedName>
        <fullName evidence="1">tRNA dimethylallyltransferase</fullName>
        <ecNumber evidence="1">2.5.1.75</ecNumber>
    </recommendedName>
    <alternativeName>
        <fullName evidence="1">Dimethylallyl diphosphate:tRNA dimethylallyltransferase</fullName>
        <shortName evidence="1">DMAPP:tRNA dimethylallyltransferase</shortName>
        <shortName evidence="1">DMATase</shortName>
    </alternativeName>
    <alternativeName>
        <fullName evidence="1">Isopentenyl-diphosphate:tRNA isopentenyltransferase</fullName>
        <shortName evidence="1">IPP transferase</shortName>
        <shortName evidence="1">IPPT</shortName>
        <shortName evidence="1">IPTase</shortName>
    </alternativeName>
</protein>
<accession>A4YZB3</accession>
<organism>
    <name type="scientific">Bradyrhizobium sp. (strain ORS 278)</name>
    <dbReference type="NCBI Taxonomy" id="114615"/>
    <lineage>
        <taxon>Bacteria</taxon>
        <taxon>Pseudomonadati</taxon>
        <taxon>Pseudomonadota</taxon>
        <taxon>Alphaproteobacteria</taxon>
        <taxon>Hyphomicrobiales</taxon>
        <taxon>Nitrobacteraceae</taxon>
        <taxon>Bradyrhizobium</taxon>
    </lineage>
</organism>
<feature type="chain" id="PRO_0000377092" description="tRNA dimethylallyltransferase">
    <location>
        <begin position="1"/>
        <end position="308"/>
    </location>
</feature>
<feature type="region of interest" description="Interaction with substrate tRNA" evidence="1">
    <location>
        <begin position="39"/>
        <end position="42"/>
    </location>
</feature>
<feature type="binding site" evidence="1">
    <location>
        <begin position="14"/>
        <end position="21"/>
    </location>
    <ligand>
        <name>ATP</name>
        <dbReference type="ChEBI" id="CHEBI:30616"/>
    </ligand>
</feature>
<feature type="binding site" evidence="1">
    <location>
        <begin position="16"/>
        <end position="21"/>
    </location>
    <ligand>
        <name>substrate</name>
    </ligand>
</feature>
<feature type="site" description="Interaction with substrate tRNA" evidence="1">
    <location>
        <position position="105"/>
    </location>
</feature>
<feature type="site" description="Interaction with substrate tRNA" evidence="1">
    <location>
        <position position="127"/>
    </location>
</feature>
<evidence type="ECO:0000255" key="1">
    <source>
        <dbReference type="HAMAP-Rule" id="MF_00185"/>
    </source>
</evidence>
<name>MIAA_BRASO</name>
<sequence>MTLLSDNKAVLIAGPTASGKSALALELAQKAGAVIINTDSMQVYHDLRVLTARPAPEDEALVPHRLYGHVDAAVNYSAGHYVRDAAQVLDEVRREGRLPVFIGGTGLYFKALTRGLSAVPPVPDDIREAVRLKLDRDGVEALHAELARRDAAAAARLNVRDRTRIARALEVIEATGRPLADWHAETTPPLLPPERTHALFIAPEREALYARIDARFETMLEAGALAEVERLAARGLDPLLPAMKAHGVPALIRYLRGEITREEAATIGKADTRHYAKRQFTWFRHQLPEFEWMSPEAAKGLVRALKVR</sequence>
<gene>
    <name evidence="1" type="primary">miaA</name>
    <name type="ordered locus">BRADO5567</name>
</gene>
<comment type="function">
    <text evidence="1">Catalyzes the transfer of a dimethylallyl group onto the adenine at position 37 in tRNAs that read codons beginning with uridine, leading to the formation of N6-(dimethylallyl)adenosine (i(6)A).</text>
</comment>
<comment type="catalytic activity">
    <reaction evidence="1">
        <text>adenosine(37) in tRNA + dimethylallyl diphosphate = N(6)-dimethylallyladenosine(37) in tRNA + diphosphate</text>
        <dbReference type="Rhea" id="RHEA:26482"/>
        <dbReference type="Rhea" id="RHEA-COMP:10162"/>
        <dbReference type="Rhea" id="RHEA-COMP:10375"/>
        <dbReference type="ChEBI" id="CHEBI:33019"/>
        <dbReference type="ChEBI" id="CHEBI:57623"/>
        <dbReference type="ChEBI" id="CHEBI:74411"/>
        <dbReference type="ChEBI" id="CHEBI:74415"/>
        <dbReference type="EC" id="2.5.1.75"/>
    </reaction>
</comment>
<comment type="cofactor">
    <cofactor evidence="1">
        <name>Mg(2+)</name>
        <dbReference type="ChEBI" id="CHEBI:18420"/>
    </cofactor>
</comment>
<comment type="subunit">
    <text evidence="1">Monomer.</text>
</comment>
<comment type="similarity">
    <text evidence="1">Belongs to the IPP transferase family.</text>
</comment>
<dbReference type="EC" id="2.5.1.75" evidence="1"/>
<dbReference type="EMBL" id="CU234118">
    <property type="protein sequence ID" value="CAL79239.1"/>
    <property type="molecule type" value="Genomic_DNA"/>
</dbReference>
<dbReference type="RefSeq" id="WP_012029150.1">
    <property type="nucleotide sequence ID" value="NC_009445.1"/>
</dbReference>
<dbReference type="SMR" id="A4YZB3"/>
<dbReference type="STRING" id="114615.BRADO5567"/>
<dbReference type="KEGG" id="bra:BRADO5567"/>
<dbReference type="eggNOG" id="COG0324">
    <property type="taxonomic scope" value="Bacteria"/>
</dbReference>
<dbReference type="HOGENOM" id="CLU_032616_0_1_5"/>
<dbReference type="OrthoDB" id="9776390at2"/>
<dbReference type="Proteomes" id="UP000001994">
    <property type="component" value="Chromosome"/>
</dbReference>
<dbReference type="GO" id="GO:0005524">
    <property type="term" value="F:ATP binding"/>
    <property type="evidence" value="ECO:0007669"/>
    <property type="project" value="UniProtKB-UniRule"/>
</dbReference>
<dbReference type="GO" id="GO:0052381">
    <property type="term" value="F:tRNA dimethylallyltransferase activity"/>
    <property type="evidence" value="ECO:0007669"/>
    <property type="project" value="UniProtKB-UniRule"/>
</dbReference>
<dbReference type="GO" id="GO:0006400">
    <property type="term" value="P:tRNA modification"/>
    <property type="evidence" value="ECO:0007669"/>
    <property type="project" value="TreeGrafter"/>
</dbReference>
<dbReference type="Gene3D" id="1.10.20.140">
    <property type="match status" value="1"/>
</dbReference>
<dbReference type="Gene3D" id="3.40.50.300">
    <property type="entry name" value="P-loop containing nucleotide triphosphate hydrolases"/>
    <property type="match status" value="1"/>
</dbReference>
<dbReference type="HAMAP" id="MF_00185">
    <property type="entry name" value="IPP_trans"/>
    <property type="match status" value="1"/>
</dbReference>
<dbReference type="InterPro" id="IPR039657">
    <property type="entry name" value="Dimethylallyltransferase"/>
</dbReference>
<dbReference type="InterPro" id="IPR018022">
    <property type="entry name" value="IPT"/>
</dbReference>
<dbReference type="InterPro" id="IPR027417">
    <property type="entry name" value="P-loop_NTPase"/>
</dbReference>
<dbReference type="NCBIfam" id="TIGR00174">
    <property type="entry name" value="miaA"/>
    <property type="match status" value="1"/>
</dbReference>
<dbReference type="PANTHER" id="PTHR11088">
    <property type="entry name" value="TRNA DIMETHYLALLYLTRANSFERASE"/>
    <property type="match status" value="1"/>
</dbReference>
<dbReference type="PANTHER" id="PTHR11088:SF60">
    <property type="entry name" value="TRNA DIMETHYLALLYLTRANSFERASE"/>
    <property type="match status" value="1"/>
</dbReference>
<dbReference type="Pfam" id="PF01715">
    <property type="entry name" value="IPPT"/>
    <property type="match status" value="1"/>
</dbReference>
<dbReference type="SUPFAM" id="SSF52540">
    <property type="entry name" value="P-loop containing nucleoside triphosphate hydrolases"/>
    <property type="match status" value="2"/>
</dbReference>
<proteinExistence type="inferred from homology"/>
<keyword id="KW-0067">ATP-binding</keyword>
<keyword id="KW-0460">Magnesium</keyword>
<keyword id="KW-0547">Nucleotide-binding</keyword>
<keyword id="KW-1185">Reference proteome</keyword>
<keyword id="KW-0808">Transferase</keyword>
<keyword id="KW-0819">tRNA processing</keyword>